<name>FOLD_STAAT</name>
<comment type="function">
    <text evidence="1">Catalyzes the oxidation of 5,10-methylenetetrahydrofolate to 5,10-methenyltetrahydrofolate and then the hydrolysis of 5,10-methenyltetrahydrofolate to 10-formyltetrahydrofolate.</text>
</comment>
<comment type="catalytic activity">
    <reaction evidence="1">
        <text>(6R)-5,10-methylene-5,6,7,8-tetrahydrofolate + NADP(+) = (6R)-5,10-methenyltetrahydrofolate + NADPH</text>
        <dbReference type="Rhea" id="RHEA:22812"/>
        <dbReference type="ChEBI" id="CHEBI:15636"/>
        <dbReference type="ChEBI" id="CHEBI:57455"/>
        <dbReference type="ChEBI" id="CHEBI:57783"/>
        <dbReference type="ChEBI" id="CHEBI:58349"/>
        <dbReference type="EC" id="1.5.1.5"/>
    </reaction>
</comment>
<comment type="catalytic activity">
    <reaction evidence="1">
        <text>(6R)-5,10-methenyltetrahydrofolate + H2O = (6R)-10-formyltetrahydrofolate + H(+)</text>
        <dbReference type="Rhea" id="RHEA:23700"/>
        <dbReference type="ChEBI" id="CHEBI:15377"/>
        <dbReference type="ChEBI" id="CHEBI:15378"/>
        <dbReference type="ChEBI" id="CHEBI:57455"/>
        <dbReference type="ChEBI" id="CHEBI:195366"/>
        <dbReference type="EC" id="3.5.4.9"/>
    </reaction>
</comment>
<comment type="pathway">
    <text evidence="1">One-carbon metabolism; tetrahydrofolate interconversion.</text>
</comment>
<comment type="subunit">
    <text evidence="1">Homodimer.</text>
</comment>
<comment type="similarity">
    <text evidence="1">Belongs to the tetrahydrofolate dehydrogenase/cyclohydrolase family.</text>
</comment>
<accession>A8Z1K5</accession>
<reference key="1">
    <citation type="journal article" date="2007" name="BMC Microbiol.">
        <title>Subtle genetic changes enhance virulence of methicillin resistant and sensitive Staphylococcus aureus.</title>
        <authorList>
            <person name="Highlander S.K."/>
            <person name="Hulten K.G."/>
            <person name="Qin X."/>
            <person name="Jiang H."/>
            <person name="Yerrapragada S."/>
            <person name="Mason E.O. Jr."/>
            <person name="Shang Y."/>
            <person name="Williams T.M."/>
            <person name="Fortunov R.M."/>
            <person name="Liu Y."/>
            <person name="Igboeli O."/>
            <person name="Petrosino J."/>
            <person name="Tirumalai M."/>
            <person name="Uzman A."/>
            <person name="Fox G.E."/>
            <person name="Cardenas A.M."/>
            <person name="Muzny D.M."/>
            <person name="Hemphill L."/>
            <person name="Ding Y."/>
            <person name="Dugan S."/>
            <person name="Blyth P.R."/>
            <person name="Buhay C.J."/>
            <person name="Dinh H.H."/>
            <person name="Hawes A.C."/>
            <person name="Holder M."/>
            <person name="Kovar C.L."/>
            <person name="Lee S.L."/>
            <person name="Liu W."/>
            <person name="Nazareth L.V."/>
            <person name="Wang Q."/>
            <person name="Zhou J."/>
            <person name="Kaplan S.L."/>
            <person name="Weinstock G.M."/>
        </authorList>
    </citation>
    <scope>NUCLEOTIDE SEQUENCE [LARGE SCALE GENOMIC DNA]</scope>
    <source>
        <strain>USA300 / TCH1516</strain>
    </source>
</reference>
<proteinExistence type="inferred from homology"/>
<organism>
    <name type="scientific">Staphylococcus aureus (strain USA300 / TCH1516)</name>
    <dbReference type="NCBI Taxonomy" id="451516"/>
    <lineage>
        <taxon>Bacteria</taxon>
        <taxon>Bacillati</taxon>
        <taxon>Bacillota</taxon>
        <taxon>Bacilli</taxon>
        <taxon>Bacillales</taxon>
        <taxon>Staphylococcaceae</taxon>
        <taxon>Staphylococcus</taxon>
    </lineage>
</organism>
<feature type="chain" id="PRO_1000087924" description="Bifunctional protein FolD">
    <location>
        <begin position="1"/>
        <end position="286"/>
    </location>
</feature>
<feature type="binding site" evidence="1">
    <location>
        <begin position="165"/>
        <end position="167"/>
    </location>
    <ligand>
        <name>NADP(+)</name>
        <dbReference type="ChEBI" id="CHEBI:58349"/>
    </ligand>
</feature>
<feature type="binding site" evidence="1">
    <location>
        <position position="190"/>
    </location>
    <ligand>
        <name>NADP(+)</name>
        <dbReference type="ChEBI" id="CHEBI:58349"/>
    </ligand>
</feature>
<dbReference type="EC" id="1.5.1.5" evidence="1"/>
<dbReference type="EC" id="3.5.4.9" evidence="1"/>
<dbReference type="EMBL" id="CP000730">
    <property type="protein sequence ID" value="ABX29028.1"/>
    <property type="molecule type" value="Genomic_DNA"/>
</dbReference>
<dbReference type="RefSeq" id="WP_000225837.1">
    <property type="nucleotide sequence ID" value="NC_010079.1"/>
</dbReference>
<dbReference type="SMR" id="A8Z1K5"/>
<dbReference type="KEGG" id="sax:USA300HOU_1008"/>
<dbReference type="HOGENOM" id="CLU_034045_2_1_9"/>
<dbReference type="UniPathway" id="UPA00193"/>
<dbReference type="GO" id="GO:0005829">
    <property type="term" value="C:cytosol"/>
    <property type="evidence" value="ECO:0007669"/>
    <property type="project" value="TreeGrafter"/>
</dbReference>
<dbReference type="GO" id="GO:0004477">
    <property type="term" value="F:methenyltetrahydrofolate cyclohydrolase activity"/>
    <property type="evidence" value="ECO:0007669"/>
    <property type="project" value="UniProtKB-UniRule"/>
</dbReference>
<dbReference type="GO" id="GO:0004488">
    <property type="term" value="F:methylenetetrahydrofolate dehydrogenase (NADP+) activity"/>
    <property type="evidence" value="ECO:0007669"/>
    <property type="project" value="UniProtKB-UniRule"/>
</dbReference>
<dbReference type="GO" id="GO:0000105">
    <property type="term" value="P:L-histidine biosynthetic process"/>
    <property type="evidence" value="ECO:0007669"/>
    <property type="project" value="UniProtKB-KW"/>
</dbReference>
<dbReference type="GO" id="GO:0009086">
    <property type="term" value="P:methionine biosynthetic process"/>
    <property type="evidence" value="ECO:0007669"/>
    <property type="project" value="UniProtKB-KW"/>
</dbReference>
<dbReference type="GO" id="GO:0006164">
    <property type="term" value="P:purine nucleotide biosynthetic process"/>
    <property type="evidence" value="ECO:0007669"/>
    <property type="project" value="UniProtKB-KW"/>
</dbReference>
<dbReference type="GO" id="GO:0035999">
    <property type="term" value="P:tetrahydrofolate interconversion"/>
    <property type="evidence" value="ECO:0007669"/>
    <property type="project" value="UniProtKB-UniRule"/>
</dbReference>
<dbReference type="CDD" id="cd01080">
    <property type="entry name" value="NAD_bind_m-THF_DH_Cyclohyd"/>
    <property type="match status" value="1"/>
</dbReference>
<dbReference type="FunFam" id="3.40.50.10860:FF:000001">
    <property type="entry name" value="Bifunctional protein FolD"/>
    <property type="match status" value="1"/>
</dbReference>
<dbReference type="FunFam" id="3.40.50.720:FF:000094">
    <property type="entry name" value="Bifunctional protein FolD"/>
    <property type="match status" value="1"/>
</dbReference>
<dbReference type="Gene3D" id="3.40.50.10860">
    <property type="entry name" value="Leucine Dehydrogenase, chain A, domain 1"/>
    <property type="match status" value="1"/>
</dbReference>
<dbReference type="Gene3D" id="3.40.50.720">
    <property type="entry name" value="NAD(P)-binding Rossmann-like Domain"/>
    <property type="match status" value="1"/>
</dbReference>
<dbReference type="HAMAP" id="MF_01576">
    <property type="entry name" value="THF_DHG_CYH"/>
    <property type="match status" value="1"/>
</dbReference>
<dbReference type="InterPro" id="IPR046346">
    <property type="entry name" value="Aminoacid_DH-like_N_sf"/>
</dbReference>
<dbReference type="InterPro" id="IPR036291">
    <property type="entry name" value="NAD(P)-bd_dom_sf"/>
</dbReference>
<dbReference type="InterPro" id="IPR000672">
    <property type="entry name" value="THF_DH/CycHdrlase"/>
</dbReference>
<dbReference type="InterPro" id="IPR020630">
    <property type="entry name" value="THF_DH/CycHdrlase_cat_dom"/>
</dbReference>
<dbReference type="InterPro" id="IPR020631">
    <property type="entry name" value="THF_DH/CycHdrlase_NAD-bd_dom"/>
</dbReference>
<dbReference type="NCBIfam" id="NF010772">
    <property type="entry name" value="PRK14175.1"/>
    <property type="match status" value="1"/>
</dbReference>
<dbReference type="PANTHER" id="PTHR48099:SF5">
    <property type="entry name" value="C-1-TETRAHYDROFOLATE SYNTHASE, CYTOPLASMIC"/>
    <property type="match status" value="1"/>
</dbReference>
<dbReference type="PANTHER" id="PTHR48099">
    <property type="entry name" value="C-1-TETRAHYDROFOLATE SYNTHASE, CYTOPLASMIC-RELATED"/>
    <property type="match status" value="1"/>
</dbReference>
<dbReference type="Pfam" id="PF00763">
    <property type="entry name" value="THF_DHG_CYH"/>
    <property type="match status" value="1"/>
</dbReference>
<dbReference type="Pfam" id="PF02882">
    <property type="entry name" value="THF_DHG_CYH_C"/>
    <property type="match status" value="1"/>
</dbReference>
<dbReference type="PRINTS" id="PR00085">
    <property type="entry name" value="THFDHDRGNASE"/>
</dbReference>
<dbReference type="SUPFAM" id="SSF53223">
    <property type="entry name" value="Aminoacid dehydrogenase-like, N-terminal domain"/>
    <property type="match status" value="1"/>
</dbReference>
<dbReference type="SUPFAM" id="SSF51735">
    <property type="entry name" value="NAD(P)-binding Rossmann-fold domains"/>
    <property type="match status" value="1"/>
</dbReference>
<sequence length="286" mass="30844">MVAKILDGKQIAKDYRQGLQDQVEALKEKGFTPKLSVILVGNDGASQSYVRSKKKAAEKIGMISEIVHLEETATEEEVLNELNRLNNDDSVSGILVQVPLPKQVSEQKILEAINPEKDVDGFHPINIGKLYIDEQTFVPCTPLGIMEILKHADIDLEGKNAVVIGRSHIVGQPVSKLLLQKNASVTILHSRSKDMASYLKDADVIVSAVGKPGLVTKDVVKEGAVIIDVGNTPDENGKLKGDVDYDAVKEIAGAITPVPGGVGPLTITMVLNNTLLAEKMRRGIDS</sequence>
<evidence type="ECO:0000255" key="1">
    <source>
        <dbReference type="HAMAP-Rule" id="MF_01576"/>
    </source>
</evidence>
<keyword id="KW-0028">Amino-acid biosynthesis</keyword>
<keyword id="KW-0368">Histidine biosynthesis</keyword>
<keyword id="KW-0378">Hydrolase</keyword>
<keyword id="KW-0486">Methionine biosynthesis</keyword>
<keyword id="KW-0511">Multifunctional enzyme</keyword>
<keyword id="KW-0521">NADP</keyword>
<keyword id="KW-0554">One-carbon metabolism</keyword>
<keyword id="KW-0560">Oxidoreductase</keyword>
<keyword id="KW-0658">Purine biosynthesis</keyword>
<protein>
    <recommendedName>
        <fullName evidence="1">Bifunctional protein FolD</fullName>
    </recommendedName>
    <domain>
        <recommendedName>
            <fullName evidence="1">Methylenetetrahydrofolate dehydrogenase</fullName>
            <ecNumber evidence="1">1.5.1.5</ecNumber>
        </recommendedName>
    </domain>
    <domain>
        <recommendedName>
            <fullName evidence="1">Methenyltetrahydrofolate cyclohydrolase</fullName>
            <ecNumber evidence="1">3.5.4.9</ecNumber>
        </recommendedName>
    </domain>
</protein>
<gene>
    <name evidence="1" type="primary">folD</name>
    <name type="ordered locus">USA300HOU_1008</name>
</gene>